<proteinExistence type="evidence at protein level"/>
<name>NANA_STREE</name>
<keyword id="KW-0002">3D-structure</keyword>
<keyword id="KW-0134">Cell wall</keyword>
<keyword id="KW-0326">Glycosidase</keyword>
<keyword id="KW-0378">Hydrolase</keyword>
<keyword id="KW-0572">Peptidoglycan-anchor</keyword>
<keyword id="KW-0677">Repeat</keyword>
<keyword id="KW-0964">Secreted</keyword>
<keyword id="KW-0732">Signal</keyword>
<protein>
    <recommendedName>
        <fullName>Sialidase A</fullName>
        <ecNumber>3.2.1.18</ecNumber>
    </recommendedName>
    <alternativeName>
        <fullName>Neuraminidase A</fullName>
    </alternativeName>
</protein>
<dbReference type="EC" id="3.2.1.18"/>
<dbReference type="EMBL" id="X72967">
    <property type="protein sequence ID" value="CAA51473.1"/>
    <property type="molecule type" value="Genomic_DNA"/>
</dbReference>
<dbReference type="EMBL" id="U43526">
    <property type="protein sequence ID" value="AAC44391.1"/>
    <property type="molecule type" value="Genomic_DNA"/>
</dbReference>
<dbReference type="PIR" id="T30287">
    <property type="entry name" value="T30287"/>
</dbReference>
<dbReference type="PDB" id="2VVZ">
    <property type="method" value="X-ray"/>
    <property type="resolution" value="2.50 A"/>
    <property type="chains" value="A/B=319-822"/>
</dbReference>
<dbReference type="PDB" id="2YA4">
    <property type="method" value="X-ray"/>
    <property type="resolution" value="1.80 A"/>
    <property type="chains" value="A/B=318-791"/>
</dbReference>
<dbReference type="PDB" id="2YA5">
    <property type="method" value="X-ray"/>
    <property type="resolution" value="2.00 A"/>
    <property type="chains" value="A/B=318-791"/>
</dbReference>
<dbReference type="PDB" id="2YA6">
    <property type="method" value="X-ray"/>
    <property type="resolution" value="2.00 A"/>
    <property type="chains" value="A/B=318-791"/>
</dbReference>
<dbReference type="PDB" id="2YA7">
    <property type="method" value="X-ray"/>
    <property type="resolution" value="1.89 A"/>
    <property type="chains" value="A/B/C/D=318-791"/>
</dbReference>
<dbReference type="PDB" id="2YA8">
    <property type="method" value="X-ray"/>
    <property type="resolution" value="1.75 A"/>
    <property type="chains" value="A/B=318-791"/>
</dbReference>
<dbReference type="PDB" id="4C1X">
    <property type="method" value="X-ray"/>
    <property type="resolution" value="1.84 A"/>
    <property type="chains" value="A=121-305"/>
</dbReference>
<dbReference type="PDB" id="4ZXK">
    <property type="method" value="X-ray"/>
    <property type="resolution" value="1.84 A"/>
    <property type="chains" value="A/B=121-305"/>
</dbReference>
<dbReference type="PDB" id="5KKY">
    <property type="method" value="X-ray"/>
    <property type="resolution" value="2.39 A"/>
    <property type="chains" value="A/B=318-792"/>
</dbReference>
<dbReference type="PDB" id="7A54">
    <property type="method" value="X-ray"/>
    <property type="resolution" value="2.70 A"/>
    <property type="chains" value="A/B=318-791"/>
</dbReference>
<dbReference type="PDB" id="7A5X">
    <property type="method" value="X-ray"/>
    <property type="resolution" value="1.94 A"/>
    <property type="chains" value="A/B=318-791"/>
</dbReference>
<dbReference type="PDBsum" id="2VVZ"/>
<dbReference type="PDBsum" id="2YA4"/>
<dbReference type="PDBsum" id="2YA5"/>
<dbReference type="PDBsum" id="2YA6"/>
<dbReference type="PDBsum" id="2YA7"/>
<dbReference type="PDBsum" id="2YA8"/>
<dbReference type="PDBsum" id="4C1X"/>
<dbReference type="PDBsum" id="4ZXK"/>
<dbReference type="PDBsum" id="5KKY"/>
<dbReference type="PDBsum" id="7A54"/>
<dbReference type="PDBsum" id="7A5X"/>
<dbReference type="SMR" id="P62575"/>
<dbReference type="BindingDB" id="P62575"/>
<dbReference type="ChEMBL" id="CHEMBL4105839"/>
<dbReference type="CAZy" id="CBM40">
    <property type="family name" value="Carbohydrate-Binding Module Family 40"/>
</dbReference>
<dbReference type="CAZy" id="GH33">
    <property type="family name" value="Glycoside Hydrolase Family 33"/>
</dbReference>
<dbReference type="BRENDA" id="3.2.1.18">
    <property type="organism ID" value="1960"/>
</dbReference>
<dbReference type="SABIO-RK" id="P62575"/>
<dbReference type="EvolutionaryTrace" id="P62575"/>
<dbReference type="GO" id="GO:0005737">
    <property type="term" value="C:cytoplasm"/>
    <property type="evidence" value="ECO:0007669"/>
    <property type="project" value="TreeGrafter"/>
</dbReference>
<dbReference type="GO" id="GO:0005576">
    <property type="term" value="C:extracellular region"/>
    <property type="evidence" value="ECO:0007669"/>
    <property type="project" value="UniProtKB-KW"/>
</dbReference>
<dbReference type="GO" id="GO:0043231">
    <property type="term" value="C:intracellular membrane-bounded organelle"/>
    <property type="evidence" value="ECO:0007669"/>
    <property type="project" value="TreeGrafter"/>
</dbReference>
<dbReference type="GO" id="GO:0016020">
    <property type="term" value="C:membrane"/>
    <property type="evidence" value="ECO:0007669"/>
    <property type="project" value="TreeGrafter"/>
</dbReference>
<dbReference type="GO" id="GO:0004308">
    <property type="term" value="F:exo-alpha-sialidase activity"/>
    <property type="evidence" value="ECO:0007669"/>
    <property type="project" value="UniProtKB-EC"/>
</dbReference>
<dbReference type="GO" id="GO:0006689">
    <property type="term" value="P:ganglioside catabolic process"/>
    <property type="evidence" value="ECO:0007669"/>
    <property type="project" value="TreeGrafter"/>
</dbReference>
<dbReference type="GO" id="GO:0009313">
    <property type="term" value="P:oligosaccharide catabolic process"/>
    <property type="evidence" value="ECO:0007669"/>
    <property type="project" value="TreeGrafter"/>
</dbReference>
<dbReference type="CDD" id="cd15482">
    <property type="entry name" value="Sialidase_non-viral"/>
    <property type="match status" value="1"/>
</dbReference>
<dbReference type="FunFam" id="2.40.220.10:FF:000001">
    <property type="entry name" value="Sialidase A"/>
    <property type="match status" value="1"/>
</dbReference>
<dbReference type="Gene3D" id="2.120.10.10">
    <property type="match status" value="1"/>
</dbReference>
<dbReference type="Gene3D" id="2.60.120.200">
    <property type="match status" value="1"/>
</dbReference>
<dbReference type="Gene3D" id="2.40.220.10">
    <property type="entry name" value="Intramolecular Trans-sialidase, Domain 3"/>
    <property type="match status" value="1"/>
</dbReference>
<dbReference type="InterPro" id="IPR013320">
    <property type="entry name" value="ConA-like_dom_sf"/>
</dbReference>
<dbReference type="InterPro" id="IPR004124">
    <property type="entry name" value="Glyco_hydro_33_N"/>
</dbReference>
<dbReference type="InterPro" id="IPR001791">
    <property type="entry name" value="Laminin_G"/>
</dbReference>
<dbReference type="InterPro" id="IPR019931">
    <property type="entry name" value="LPXTG_anchor"/>
</dbReference>
<dbReference type="InterPro" id="IPR049964">
    <property type="entry name" value="NanA_rpt"/>
</dbReference>
<dbReference type="InterPro" id="IPR011040">
    <property type="entry name" value="Sialidase"/>
</dbReference>
<dbReference type="InterPro" id="IPR026856">
    <property type="entry name" value="Sialidase_fam"/>
</dbReference>
<dbReference type="InterPro" id="IPR036278">
    <property type="entry name" value="Sialidase_sf"/>
</dbReference>
<dbReference type="InterPro" id="IPR023364">
    <property type="entry name" value="Trans_sialidase_dom3"/>
</dbReference>
<dbReference type="InterPro" id="IPR005877">
    <property type="entry name" value="YSIRK_signal_dom"/>
</dbReference>
<dbReference type="NCBIfam" id="TIGR01167">
    <property type="entry name" value="LPXTG_anchor"/>
    <property type="match status" value="1"/>
</dbReference>
<dbReference type="NCBIfam" id="NF043031">
    <property type="entry name" value="SIALI-17"/>
    <property type="match status" value="3"/>
</dbReference>
<dbReference type="NCBIfam" id="TIGR01168">
    <property type="entry name" value="YSIRK_signal"/>
    <property type="match status" value="1"/>
</dbReference>
<dbReference type="PANTHER" id="PTHR10628:SF30">
    <property type="entry name" value="EXO-ALPHA-SIALIDASE"/>
    <property type="match status" value="1"/>
</dbReference>
<dbReference type="PANTHER" id="PTHR10628">
    <property type="entry name" value="SIALIDASE"/>
    <property type="match status" value="1"/>
</dbReference>
<dbReference type="Pfam" id="PF13088">
    <property type="entry name" value="BNR_2"/>
    <property type="match status" value="1"/>
</dbReference>
<dbReference type="Pfam" id="PF02973">
    <property type="entry name" value="Sialidase"/>
    <property type="match status" value="1"/>
</dbReference>
<dbReference type="Pfam" id="PF04650">
    <property type="entry name" value="YSIRK_signal"/>
    <property type="match status" value="1"/>
</dbReference>
<dbReference type="SMART" id="SM00282">
    <property type="entry name" value="LamG"/>
    <property type="match status" value="1"/>
</dbReference>
<dbReference type="SUPFAM" id="SSF49899">
    <property type="entry name" value="Concanavalin A-like lectins/glucanases"/>
    <property type="match status" value="1"/>
</dbReference>
<dbReference type="SUPFAM" id="SSF50939">
    <property type="entry name" value="Sialidases"/>
    <property type="match status" value="1"/>
</dbReference>
<dbReference type="PROSITE" id="PS50847">
    <property type="entry name" value="GRAM_POS_ANCHORING"/>
    <property type="match status" value="1"/>
</dbReference>
<feature type="signal peptide" evidence="2">
    <location>
        <begin position="1"/>
        <end position="53"/>
    </location>
</feature>
<feature type="chain" id="PRO_0000012034" description="Sialidase A">
    <location>
        <begin position="54"/>
        <end position="1006"/>
    </location>
</feature>
<feature type="propeptide" id="PRO_0000012035" description="Removed by sortase" evidence="3">
    <location>
        <begin position="1007"/>
        <end position="1035"/>
    </location>
</feature>
<feature type="repeat" description="BNR 1">
    <location>
        <begin position="381"/>
        <end position="392"/>
    </location>
</feature>
<feature type="repeat" description="BNR 2">
    <location>
        <begin position="539"/>
        <end position="550"/>
    </location>
</feature>
<feature type="repeat" description="BNR 3">
    <location>
        <begin position="607"/>
        <end position="618"/>
    </location>
</feature>
<feature type="repeat" description="BNR 4">
    <location>
        <begin position="672"/>
        <end position="683"/>
    </location>
</feature>
<feature type="region of interest" description="Disordered" evidence="4">
    <location>
        <begin position="57"/>
        <end position="112"/>
    </location>
</feature>
<feature type="region of interest" description="Disordered" evidence="4">
    <location>
        <begin position="902"/>
        <end position="951"/>
    </location>
</feature>
<feature type="short sequence motif" description="LPXTG sorting signal" evidence="3">
    <location>
        <begin position="1003"/>
        <end position="1007"/>
    </location>
</feature>
<feature type="compositionally biased region" description="Polar residues" evidence="4">
    <location>
        <begin position="61"/>
        <end position="92"/>
    </location>
</feature>
<feature type="compositionally biased region" description="Basic and acidic residues" evidence="4">
    <location>
        <begin position="94"/>
        <end position="112"/>
    </location>
</feature>
<feature type="active site" description="Proton acceptor" evidence="1">
    <location>
        <position position="372"/>
    </location>
</feature>
<feature type="active site" evidence="1">
    <location>
        <position position="647"/>
    </location>
</feature>
<feature type="binding site" evidence="1">
    <location>
        <position position="347"/>
    </location>
    <ligand>
        <name>substrate</name>
    </ligand>
</feature>
<feature type="binding site" evidence="1">
    <location>
        <position position="663"/>
    </location>
    <ligand>
        <name>substrate</name>
    </ligand>
</feature>
<feature type="modified residue" description="Pentaglycyl murein peptidoglycan amidated threonine" evidence="3">
    <location>
        <position position="1006"/>
    </location>
</feature>
<feature type="strand" evidence="8">
    <location>
        <begin position="121"/>
        <end position="129"/>
    </location>
</feature>
<feature type="helix" evidence="8">
    <location>
        <begin position="131"/>
        <end position="133"/>
    </location>
</feature>
<feature type="strand" evidence="8">
    <location>
        <begin position="136"/>
        <end position="138"/>
    </location>
</feature>
<feature type="helix" evidence="8">
    <location>
        <begin position="140"/>
        <end position="142"/>
    </location>
</feature>
<feature type="helix" evidence="8">
    <location>
        <begin position="143"/>
        <end position="147"/>
    </location>
</feature>
<feature type="strand" evidence="8">
    <location>
        <begin position="150"/>
        <end position="160"/>
    </location>
</feature>
<feature type="strand" evidence="8">
    <location>
        <begin position="166"/>
        <end position="174"/>
    </location>
</feature>
<feature type="strand" evidence="8">
    <location>
        <begin position="182"/>
        <end position="188"/>
    </location>
</feature>
<feature type="strand" evidence="8">
    <location>
        <begin position="191"/>
        <end position="197"/>
    </location>
</feature>
<feature type="strand" evidence="8">
    <location>
        <begin position="203"/>
        <end position="205"/>
    </location>
</feature>
<feature type="strand" evidence="8">
    <location>
        <begin position="221"/>
        <end position="228"/>
    </location>
</feature>
<feature type="strand" evidence="8">
    <location>
        <begin position="232"/>
        <end position="234"/>
    </location>
</feature>
<feature type="strand" evidence="8">
    <location>
        <begin position="238"/>
        <end position="243"/>
    </location>
</feature>
<feature type="strand" evidence="8">
    <location>
        <begin position="246"/>
        <end position="251"/>
    </location>
</feature>
<feature type="helix" evidence="8">
    <location>
        <begin position="258"/>
        <end position="260"/>
    </location>
</feature>
<feature type="strand" evidence="8">
    <location>
        <begin position="266"/>
        <end position="274"/>
    </location>
</feature>
<feature type="strand" evidence="8">
    <location>
        <begin position="277"/>
        <end position="279"/>
    </location>
</feature>
<feature type="strand" evidence="8">
    <location>
        <begin position="284"/>
        <end position="294"/>
    </location>
</feature>
<feature type="helix" evidence="8">
    <location>
        <begin position="298"/>
        <end position="303"/>
    </location>
</feature>
<feature type="strand" evidence="7">
    <location>
        <begin position="327"/>
        <end position="330"/>
    </location>
</feature>
<feature type="strand" evidence="7">
    <location>
        <begin position="345"/>
        <end position="353"/>
    </location>
</feature>
<feature type="strand" evidence="7">
    <location>
        <begin position="359"/>
        <end position="368"/>
    </location>
</feature>
<feature type="strand" evidence="7">
    <location>
        <begin position="370"/>
        <end position="385"/>
    </location>
</feature>
<feature type="strand" evidence="10">
    <location>
        <begin position="386"/>
        <end position="388"/>
    </location>
</feature>
<feature type="strand" evidence="7">
    <location>
        <begin position="394"/>
        <end position="397"/>
    </location>
</feature>
<feature type="helix" evidence="7">
    <location>
        <begin position="408"/>
        <end position="410"/>
    </location>
</feature>
<feature type="strand" evidence="7">
    <location>
        <begin position="414"/>
        <end position="422"/>
    </location>
</feature>
<feature type="turn" evidence="7">
    <location>
        <begin position="424"/>
        <end position="426"/>
    </location>
</feature>
<feature type="strand" evidence="7">
    <location>
        <begin position="429"/>
        <end position="436"/>
    </location>
</feature>
<feature type="strand" evidence="7">
    <location>
        <begin position="438"/>
        <end position="440"/>
    </location>
</feature>
<feature type="helix" evidence="7">
    <location>
        <begin position="441"/>
        <end position="444"/>
    </location>
</feature>
<feature type="strand" evidence="7">
    <location>
        <begin position="453"/>
        <end position="456"/>
    </location>
</feature>
<feature type="strand" evidence="7">
    <location>
        <begin position="459"/>
        <end position="466"/>
    </location>
</feature>
<feature type="strand" evidence="7">
    <location>
        <begin position="473"/>
        <end position="475"/>
    </location>
</feature>
<feature type="helix" evidence="7">
    <location>
        <begin position="477"/>
        <end position="479"/>
    </location>
</feature>
<feature type="strand" evidence="7">
    <location>
        <begin position="480"/>
        <end position="482"/>
    </location>
</feature>
<feature type="strand" evidence="7">
    <location>
        <begin position="488"/>
        <end position="493"/>
    </location>
</feature>
<feature type="helix" evidence="7">
    <location>
        <begin position="500"/>
        <end position="502"/>
    </location>
</feature>
<feature type="turn" evidence="7">
    <location>
        <begin position="503"/>
        <end position="506"/>
    </location>
</feature>
<feature type="strand" evidence="7">
    <location>
        <begin position="507"/>
        <end position="510"/>
    </location>
</feature>
<feature type="strand" evidence="7">
    <location>
        <begin position="513"/>
        <end position="517"/>
    </location>
</feature>
<feature type="strand" evidence="7">
    <location>
        <begin position="525"/>
        <end position="529"/>
    </location>
</feature>
<feature type="strand" evidence="7">
    <location>
        <begin position="535"/>
        <end position="543"/>
    </location>
</feature>
<feature type="helix" evidence="7">
    <location>
        <begin position="555"/>
        <end position="558"/>
    </location>
</feature>
<feature type="strand" evidence="7">
    <location>
        <begin position="563"/>
        <end position="568"/>
    </location>
</feature>
<feature type="strand" evidence="9">
    <location>
        <begin position="570"/>
        <end position="572"/>
    </location>
</feature>
<feature type="turn" evidence="7">
    <location>
        <begin position="580"/>
        <end position="583"/>
    </location>
</feature>
<feature type="strand" evidence="7">
    <location>
        <begin position="585"/>
        <end position="593"/>
    </location>
</feature>
<feature type="turn" evidence="7">
    <location>
        <begin position="594"/>
        <end position="596"/>
    </location>
</feature>
<feature type="helix" evidence="7">
    <location>
        <begin position="597"/>
        <end position="600"/>
    </location>
</feature>
<feature type="strand" evidence="7">
    <location>
        <begin position="603"/>
        <end position="611"/>
    </location>
</feature>
<feature type="turn" evidence="7">
    <location>
        <begin position="622"/>
        <end position="625"/>
    </location>
</feature>
<feature type="strand" evidence="7">
    <location>
        <begin position="626"/>
        <end position="628"/>
    </location>
</feature>
<feature type="strand" evidence="7">
    <location>
        <begin position="631"/>
        <end position="633"/>
    </location>
</feature>
<feature type="turn" evidence="7">
    <location>
        <begin position="635"/>
        <end position="637"/>
    </location>
</feature>
<feature type="helix" evidence="7">
    <location>
        <begin position="641"/>
        <end position="643"/>
    </location>
</feature>
<feature type="strand" evidence="7">
    <location>
        <begin position="647"/>
        <end position="652"/>
    </location>
</feature>
<feature type="strand" evidence="7">
    <location>
        <begin position="658"/>
        <end position="662"/>
    </location>
</feature>
<feature type="strand" evidence="7">
    <location>
        <begin position="665"/>
        <end position="680"/>
    </location>
</feature>
<feature type="strand" evidence="7">
    <location>
        <begin position="686"/>
        <end position="692"/>
    </location>
</feature>
<feature type="strand" evidence="7">
    <location>
        <begin position="699"/>
        <end position="705"/>
    </location>
</feature>
<feature type="strand" evidence="7">
    <location>
        <begin position="708"/>
        <end position="716"/>
    </location>
</feature>
<feature type="strand" evidence="7">
    <location>
        <begin position="718"/>
        <end position="731"/>
    </location>
</feature>
<feature type="strand" evidence="6">
    <location>
        <begin position="733"/>
        <end position="735"/>
    </location>
</feature>
<feature type="strand" evidence="7">
    <location>
        <begin position="737"/>
        <end position="749"/>
    </location>
</feature>
<feature type="strand" evidence="7">
    <location>
        <begin position="753"/>
        <end position="759"/>
    </location>
</feature>
<feature type="strand" evidence="7">
    <location>
        <begin position="762"/>
        <end position="769"/>
    </location>
</feature>
<feature type="strand" evidence="7">
    <location>
        <begin position="778"/>
        <end position="785"/>
    </location>
</feature>
<feature type="helix" evidence="7">
    <location>
        <begin position="786"/>
        <end position="790"/>
    </location>
</feature>
<comment type="catalytic activity">
    <reaction>
        <text>Hydrolysis of alpha-(2-&gt;3)-, alpha-(2-&gt;6)-, alpha-(2-&gt;8)- glycosidic linkages of terminal sialic acid residues in oligosaccharides, glycoproteins, glycolipids, colominic acid and synthetic substrates.</text>
        <dbReference type="EC" id="3.2.1.18"/>
    </reaction>
</comment>
<comment type="subcellular location">
    <subcellularLocation>
        <location evidence="3">Secreted</location>
        <location evidence="3">Cell wall</location>
        <topology evidence="3">Peptidoglycan-anchor</topology>
    </subcellularLocation>
</comment>
<comment type="similarity">
    <text evidence="5">Belongs to the glycosyl hydrolase 33 family.</text>
</comment>
<accession>P62575</accession>
<accession>Q54722</accession>
<accession>Q59959</accession>
<gene>
    <name type="primary">nanA</name>
</gene>
<evidence type="ECO:0000250" key="1"/>
<evidence type="ECO:0000255" key="2"/>
<evidence type="ECO:0000255" key="3">
    <source>
        <dbReference type="PROSITE-ProRule" id="PRU00477"/>
    </source>
</evidence>
<evidence type="ECO:0000256" key="4">
    <source>
        <dbReference type="SAM" id="MobiDB-lite"/>
    </source>
</evidence>
<evidence type="ECO:0000305" key="5"/>
<evidence type="ECO:0007829" key="6">
    <source>
        <dbReference type="PDB" id="2VVZ"/>
    </source>
</evidence>
<evidence type="ECO:0007829" key="7">
    <source>
        <dbReference type="PDB" id="2YA8"/>
    </source>
</evidence>
<evidence type="ECO:0007829" key="8">
    <source>
        <dbReference type="PDB" id="4C1X"/>
    </source>
</evidence>
<evidence type="ECO:0007829" key="9">
    <source>
        <dbReference type="PDB" id="7A54"/>
    </source>
</evidence>
<evidence type="ECO:0007829" key="10">
    <source>
        <dbReference type="PDB" id="7A5X"/>
    </source>
</evidence>
<organism>
    <name type="scientific">Streptococcus pneumoniae</name>
    <dbReference type="NCBI Taxonomy" id="1313"/>
    <lineage>
        <taxon>Bacteria</taxon>
        <taxon>Bacillati</taxon>
        <taxon>Bacillota</taxon>
        <taxon>Bacilli</taxon>
        <taxon>Lactobacillales</taxon>
        <taxon>Streptococcaceae</taxon>
        <taxon>Streptococcus</taxon>
    </lineage>
</organism>
<sequence>MSYFRNRDIDIERNSMNRSVQERKCRYSIRKLSVGAVSMIVGAVVFGTSPVLAQEGASEQPLANETQLSGESSTLTDTEKSQPSSETELSGNKQEQERKDKQEEKIPRDYYARDLENVETVIEKEDVETNASNGQRVDLSSELDKLKKLENATVHMEFKPDAKAPAFYNLFSVSSATKKDEYFTMAVYNNTATLEGRGSDGKQFYNNYNDAPLKVKPGQWNSVTFTVEKPTAELPKGRVRLYVNGVLSRTSLRSGNFIKDMPDVTHVQIGATKRANNTVWGSNLQIRNLTVYNRALTPEEVQKRSQLFKRSDLEKKLPEGAALTEKTDIFESGRNGKPNKDGIKSYRIPALLKTDKGTLIAGADERRLHSSDWGDIGMVIRRSEDNGKTWGDRVTITNLRDNPKASDPSIGSPVNIDMVLVQDPETKRIFSIYDMFPEGKGIFGMSSQKEEAYKKIDGKTYQILYREGEKGAYTIRENGTVYTPDGKATDYRVVVDPVKPAYSDKGDLYKGNQLLGNIYFTTNKTSPFRIAKDSYLWMSYSDDDGKTWSAPQDITPMVKADWMKFLGVGPGTGIVLRNGPHKGRILIPVYTTNNVSHLNGSQSSRIIYSDDHGKTWHAGEAVNDNRQVDGQKIHSSTMNNRRAQNTESTVVQLNNGDVKLFMRGLTGDLQVATSKDGGVTWEKDIKRYPQVKDVYVQMSAIHTMHEGKEYIILSNAGGPKRENGMVHLARVEENGELTWLKHNPIQKGEFAYNSLQELGNGEYGILYEHTEKGQNAYTLSFRKFNWDFLSKDLISPTEAKVKRTREMGKGVIGLEFDSEVLVNKAPTLQLANGKTARFMTQYDTKTLLFTVDSEDMGQKVTGLAEGAIESMHNLPVSVAGTKLSNGMNGSEAAVHEVPEYTGPLGTSGEEPAPTVEKPEYTGPLGTSGEEPAPTVEKPEYTGPLGTAGEEAAPTVEKPEFTGGVNGTEPAVHEIAEYKGSDSLVTLTTKEDYTYKAPLAQQALPETGNKESDLLASLGLTAFFLGLFTLGKKREQ</sequence>
<reference key="1">
    <citation type="journal article" date="1994" name="Infect. Immun.">
        <title>A neuraminidase from Streptococcus pneumoniae has the features of a surface protein.</title>
        <authorList>
            <person name="Camara M."/>
            <person name="Boulnois G.J."/>
            <person name="Andrew P.W."/>
            <person name="Mitchell T.J."/>
        </authorList>
    </citation>
    <scope>NUCLEOTIDE SEQUENCE [GENOMIC DNA]</scope>
    <source>
        <strain>R36A / NCTC 10319</strain>
    </source>
</reference>
<reference key="2">
    <citation type="journal article" date="1996" name="J. Bacteriol.">
        <title>Cloning and characterization of nanB, a second Streptococcus pneumoniae neuraminidase gene, and purification of the NanB enzyme from recombinant Escherichia coli.</title>
        <authorList>
            <person name="Berry A.M."/>
            <person name="Lock R.A."/>
            <person name="Paton J.C."/>
        </authorList>
    </citation>
    <scope>NUCLEOTIDE SEQUENCE [GENOMIC DNA] OF 882-1035</scope>
    <source>
        <strain>Serotype 6</strain>
    </source>
</reference>